<proteinExistence type="inferred from homology"/>
<reference key="1">
    <citation type="journal article" date="2008" name="J. Bacteriol.">
        <title>Complete genome sequence of Neisseria gonorrhoeae NCCP11945.</title>
        <authorList>
            <person name="Chung G.T."/>
            <person name="Yoo J.S."/>
            <person name="Oh H.B."/>
            <person name="Lee Y.S."/>
            <person name="Cha S.H."/>
            <person name="Kim S.J."/>
            <person name="Yoo C.K."/>
        </authorList>
    </citation>
    <scope>NUCLEOTIDE SEQUENCE [LARGE SCALE GENOMIC DNA]</scope>
    <source>
        <strain>NCCP11945</strain>
    </source>
</reference>
<accession>B4RMG6</accession>
<organism>
    <name type="scientific">Neisseria gonorrhoeae (strain NCCP11945)</name>
    <dbReference type="NCBI Taxonomy" id="521006"/>
    <lineage>
        <taxon>Bacteria</taxon>
        <taxon>Pseudomonadati</taxon>
        <taxon>Pseudomonadota</taxon>
        <taxon>Betaproteobacteria</taxon>
        <taxon>Neisseriales</taxon>
        <taxon>Neisseriaceae</taxon>
        <taxon>Neisseria</taxon>
    </lineage>
</organism>
<evidence type="ECO:0000255" key="1">
    <source>
        <dbReference type="HAMAP-Rule" id="MF_00303"/>
    </source>
</evidence>
<sequence>MMSVTVEILENLERKVVLSLPWSEINAETDKKLKQTQRRAKIDGFRPGKAPLKMIAQMYGASAQNDVINELVQRRFYDVAVAQELKVAGYPRFEGVEEQDDKESFKVAAIFEVFPEVVIGDLSAQEVEKVTASVGDAEVDQTVEILRKQRTRFNHVDREARNGDRVIIDFEGKIDGEPFAGGASKNYAFVLGAGQMLPEFEAGVVGMKAGESKDVTVNFPEEYHGKDVAGKTAVFTITLNNVSEPTLPEVDADFAKALGIADGDVAKMREEVKKNVSREVERRVNEQTKESVMNALIKAVELKVPVALVNEEAARLANEMKQNFVNQGMTDAANLDLPLDMFKEQAERRVSLGLILAKLVDENKLEPTEEQIKAVVANFAESYEDPQEVIDWYYADTSRLQAPTSLAVESNVVDFVLGKAKVNKKALSFDEVMGAQA</sequence>
<name>TIG_NEIG2</name>
<protein>
    <recommendedName>
        <fullName evidence="1">Trigger factor</fullName>
        <shortName evidence="1">TF</shortName>
        <ecNumber evidence="1">5.2.1.8</ecNumber>
    </recommendedName>
    <alternativeName>
        <fullName evidence="1">PPIase</fullName>
    </alternativeName>
</protein>
<feature type="chain" id="PRO_1000115559" description="Trigger factor">
    <location>
        <begin position="1"/>
        <end position="437"/>
    </location>
</feature>
<feature type="domain" description="PPIase FKBP-type" evidence="1">
    <location>
        <begin position="163"/>
        <end position="248"/>
    </location>
</feature>
<keyword id="KW-0131">Cell cycle</keyword>
<keyword id="KW-0132">Cell division</keyword>
<keyword id="KW-0143">Chaperone</keyword>
<keyword id="KW-0963">Cytoplasm</keyword>
<keyword id="KW-0413">Isomerase</keyword>
<keyword id="KW-0697">Rotamase</keyword>
<gene>
    <name evidence="1" type="primary">tig</name>
    <name type="ordered locus">NGK_1326</name>
</gene>
<dbReference type="EC" id="5.2.1.8" evidence="1"/>
<dbReference type="EMBL" id="CP001050">
    <property type="protein sequence ID" value="ACF30001.1"/>
    <property type="molecule type" value="Genomic_DNA"/>
</dbReference>
<dbReference type="SMR" id="B4RMG6"/>
<dbReference type="KEGG" id="ngk:NGK_1326"/>
<dbReference type="HOGENOM" id="CLU_033058_2_0_4"/>
<dbReference type="Proteomes" id="UP000002564">
    <property type="component" value="Chromosome"/>
</dbReference>
<dbReference type="GO" id="GO:0005737">
    <property type="term" value="C:cytoplasm"/>
    <property type="evidence" value="ECO:0007669"/>
    <property type="project" value="UniProtKB-SubCell"/>
</dbReference>
<dbReference type="GO" id="GO:0003755">
    <property type="term" value="F:peptidyl-prolyl cis-trans isomerase activity"/>
    <property type="evidence" value="ECO:0007669"/>
    <property type="project" value="UniProtKB-UniRule"/>
</dbReference>
<dbReference type="GO" id="GO:0044183">
    <property type="term" value="F:protein folding chaperone"/>
    <property type="evidence" value="ECO:0007669"/>
    <property type="project" value="TreeGrafter"/>
</dbReference>
<dbReference type="GO" id="GO:0043022">
    <property type="term" value="F:ribosome binding"/>
    <property type="evidence" value="ECO:0007669"/>
    <property type="project" value="TreeGrafter"/>
</dbReference>
<dbReference type="GO" id="GO:0051083">
    <property type="term" value="P:'de novo' cotranslational protein folding"/>
    <property type="evidence" value="ECO:0007669"/>
    <property type="project" value="TreeGrafter"/>
</dbReference>
<dbReference type="GO" id="GO:0051301">
    <property type="term" value="P:cell division"/>
    <property type="evidence" value="ECO:0007669"/>
    <property type="project" value="UniProtKB-KW"/>
</dbReference>
<dbReference type="GO" id="GO:0061077">
    <property type="term" value="P:chaperone-mediated protein folding"/>
    <property type="evidence" value="ECO:0007669"/>
    <property type="project" value="TreeGrafter"/>
</dbReference>
<dbReference type="GO" id="GO:0015031">
    <property type="term" value="P:protein transport"/>
    <property type="evidence" value="ECO:0007669"/>
    <property type="project" value="UniProtKB-UniRule"/>
</dbReference>
<dbReference type="GO" id="GO:0043335">
    <property type="term" value="P:protein unfolding"/>
    <property type="evidence" value="ECO:0007669"/>
    <property type="project" value="TreeGrafter"/>
</dbReference>
<dbReference type="FunFam" id="3.10.50.40:FF:000001">
    <property type="entry name" value="Trigger factor"/>
    <property type="match status" value="1"/>
</dbReference>
<dbReference type="FunFam" id="3.30.70.1050:FF:000007">
    <property type="entry name" value="Trigger factor"/>
    <property type="match status" value="1"/>
</dbReference>
<dbReference type="Gene3D" id="3.10.50.40">
    <property type="match status" value="1"/>
</dbReference>
<dbReference type="Gene3D" id="3.30.70.1050">
    <property type="entry name" value="Trigger factor ribosome-binding domain"/>
    <property type="match status" value="1"/>
</dbReference>
<dbReference type="Gene3D" id="1.10.3120.10">
    <property type="entry name" value="Trigger factor, C-terminal domain"/>
    <property type="match status" value="1"/>
</dbReference>
<dbReference type="HAMAP" id="MF_00303">
    <property type="entry name" value="Trigger_factor_Tig"/>
    <property type="match status" value="1"/>
</dbReference>
<dbReference type="InterPro" id="IPR046357">
    <property type="entry name" value="PPIase_dom_sf"/>
</dbReference>
<dbReference type="InterPro" id="IPR001179">
    <property type="entry name" value="PPIase_FKBP_dom"/>
</dbReference>
<dbReference type="InterPro" id="IPR005215">
    <property type="entry name" value="Trig_fac"/>
</dbReference>
<dbReference type="InterPro" id="IPR008880">
    <property type="entry name" value="Trigger_fac_C"/>
</dbReference>
<dbReference type="InterPro" id="IPR037041">
    <property type="entry name" value="Trigger_fac_C_sf"/>
</dbReference>
<dbReference type="InterPro" id="IPR008881">
    <property type="entry name" value="Trigger_fac_ribosome-bd_bac"/>
</dbReference>
<dbReference type="InterPro" id="IPR036611">
    <property type="entry name" value="Trigger_fac_ribosome-bd_sf"/>
</dbReference>
<dbReference type="InterPro" id="IPR027304">
    <property type="entry name" value="Trigger_fact/SurA_dom_sf"/>
</dbReference>
<dbReference type="NCBIfam" id="TIGR00115">
    <property type="entry name" value="tig"/>
    <property type="match status" value="1"/>
</dbReference>
<dbReference type="PANTHER" id="PTHR30560">
    <property type="entry name" value="TRIGGER FACTOR CHAPERONE AND PEPTIDYL-PROLYL CIS/TRANS ISOMERASE"/>
    <property type="match status" value="1"/>
</dbReference>
<dbReference type="PANTHER" id="PTHR30560:SF3">
    <property type="entry name" value="TRIGGER FACTOR-LIKE PROTEIN TIG, CHLOROPLASTIC"/>
    <property type="match status" value="1"/>
</dbReference>
<dbReference type="Pfam" id="PF00254">
    <property type="entry name" value="FKBP_C"/>
    <property type="match status" value="1"/>
</dbReference>
<dbReference type="Pfam" id="PF05698">
    <property type="entry name" value="Trigger_C"/>
    <property type="match status" value="1"/>
</dbReference>
<dbReference type="Pfam" id="PF05697">
    <property type="entry name" value="Trigger_N"/>
    <property type="match status" value="1"/>
</dbReference>
<dbReference type="PIRSF" id="PIRSF003095">
    <property type="entry name" value="Trigger_factor"/>
    <property type="match status" value="1"/>
</dbReference>
<dbReference type="SUPFAM" id="SSF54534">
    <property type="entry name" value="FKBP-like"/>
    <property type="match status" value="1"/>
</dbReference>
<dbReference type="SUPFAM" id="SSF109998">
    <property type="entry name" value="Triger factor/SurA peptide-binding domain-like"/>
    <property type="match status" value="1"/>
</dbReference>
<dbReference type="SUPFAM" id="SSF102735">
    <property type="entry name" value="Trigger factor ribosome-binding domain"/>
    <property type="match status" value="1"/>
</dbReference>
<dbReference type="PROSITE" id="PS50059">
    <property type="entry name" value="FKBP_PPIASE"/>
    <property type="match status" value="1"/>
</dbReference>
<comment type="function">
    <text evidence="1">Involved in protein export. Acts as a chaperone by maintaining the newly synthesized protein in an open conformation. Functions as a peptidyl-prolyl cis-trans isomerase.</text>
</comment>
<comment type="catalytic activity">
    <reaction evidence="1">
        <text>[protein]-peptidylproline (omega=180) = [protein]-peptidylproline (omega=0)</text>
        <dbReference type="Rhea" id="RHEA:16237"/>
        <dbReference type="Rhea" id="RHEA-COMP:10747"/>
        <dbReference type="Rhea" id="RHEA-COMP:10748"/>
        <dbReference type="ChEBI" id="CHEBI:83833"/>
        <dbReference type="ChEBI" id="CHEBI:83834"/>
        <dbReference type="EC" id="5.2.1.8"/>
    </reaction>
</comment>
<comment type="subcellular location">
    <subcellularLocation>
        <location>Cytoplasm</location>
    </subcellularLocation>
    <text evidence="1">About half TF is bound to the ribosome near the polypeptide exit tunnel while the other half is free in the cytoplasm.</text>
</comment>
<comment type="domain">
    <text evidence="1">Consists of 3 domains; the N-terminus binds the ribosome, the middle domain has PPIase activity, while the C-terminus has intrinsic chaperone activity on its own.</text>
</comment>
<comment type="similarity">
    <text evidence="1">Belongs to the FKBP-type PPIase family. Tig subfamily.</text>
</comment>